<reference key="1">
    <citation type="journal article" date="2000" name="Nature">
        <title>The genome sequence of the thermoacidophilic scavenger Thermoplasma acidophilum.</title>
        <authorList>
            <person name="Ruepp A."/>
            <person name="Graml W."/>
            <person name="Santos-Martinez M.-L."/>
            <person name="Koretke K.K."/>
            <person name="Volker C."/>
            <person name="Mewes H.-W."/>
            <person name="Frishman D."/>
            <person name="Stocker S."/>
            <person name="Lupas A.N."/>
            <person name="Baumeister W."/>
        </authorList>
    </citation>
    <scope>NUCLEOTIDE SEQUENCE [LARGE SCALE GENOMIC DNA]</scope>
    <source>
        <strain>ATCC 25905 / DSM 1728 / JCM 9062 / NBRC 15155 / AMRC-C165</strain>
    </source>
</reference>
<comment type="function">
    <text evidence="1">Required for formate dehydrogenase (FDH) activity. Acts as a sulfur carrier protein that transfers sulfur from IscS to the molybdenum cofactor prior to its insertion into FDH.</text>
</comment>
<comment type="subcellular location">
    <subcellularLocation>
        <location evidence="1">Cytoplasm</location>
    </subcellularLocation>
</comment>
<comment type="similarity">
    <text evidence="1">Belongs to the FdhD family.</text>
</comment>
<protein>
    <recommendedName>
        <fullName evidence="1">Sulfur carrier protein FdhD</fullName>
    </recommendedName>
</protein>
<feature type="chain" id="PRO_0000152942" description="Sulfur carrier protein FdhD">
    <location>
        <begin position="1"/>
        <end position="282"/>
    </location>
</feature>
<feature type="active site" description="Cysteine persulfide intermediate" evidence="1">
    <location>
        <position position="126"/>
    </location>
</feature>
<feature type="binding site" evidence="1">
    <location>
        <begin position="265"/>
        <end position="270"/>
    </location>
    <ligand>
        <name>Mo-bis(molybdopterin guanine dinucleotide)</name>
        <dbReference type="ChEBI" id="CHEBI:60539"/>
    </ligand>
</feature>
<keyword id="KW-0963">Cytoplasm</keyword>
<keyword id="KW-0501">Molybdenum cofactor biosynthesis</keyword>
<keyword id="KW-1185">Reference proteome</keyword>
<dbReference type="EMBL" id="AL445064">
    <property type="protein sequence ID" value="CAC11565.1"/>
    <property type="molecule type" value="Genomic_DNA"/>
</dbReference>
<dbReference type="SMR" id="Q9HL17"/>
<dbReference type="STRING" id="273075.gene:9571642"/>
<dbReference type="PaxDb" id="273075-Ta0423"/>
<dbReference type="EnsemblBacteria" id="CAC11565">
    <property type="protein sequence ID" value="CAC11565"/>
    <property type="gene ID" value="CAC11565"/>
</dbReference>
<dbReference type="KEGG" id="tac:Ta0423"/>
<dbReference type="eggNOG" id="arCOG04358">
    <property type="taxonomic scope" value="Archaea"/>
</dbReference>
<dbReference type="HOGENOM" id="CLU_056887_3_0_2"/>
<dbReference type="InParanoid" id="Q9HL17"/>
<dbReference type="Proteomes" id="UP000001024">
    <property type="component" value="Chromosome"/>
</dbReference>
<dbReference type="GO" id="GO:0005737">
    <property type="term" value="C:cytoplasm"/>
    <property type="evidence" value="ECO:0007669"/>
    <property type="project" value="UniProtKB-SubCell"/>
</dbReference>
<dbReference type="GO" id="GO:0097163">
    <property type="term" value="F:sulfur carrier activity"/>
    <property type="evidence" value="ECO:0007669"/>
    <property type="project" value="UniProtKB-UniRule"/>
</dbReference>
<dbReference type="GO" id="GO:0016783">
    <property type="term" value="F:sulfurtransferase activity"/>
    <property type="evidence" value="ECO:0007669"/>
    <property type="project" value="InterPro"/>
</dbReference>
<dbReference type="GO" id="GO:0006777">
    <property type="term" value="P:Mo-molybdopterin cofactor biosynthetic process"/>
    <property type="evidence" value="ECO:0007669"/>
    <property type="project" value="UniProtKB-UniRule"/>
</dbReference>
<dbReference type="Gene3D" id="3.10.20.10">
    <property type="match status" value="1"/>
</dbReference>
<dbReference type="Gene3D" id="3.40.140.10">
    <property type="entry name" value="Cytidine Deaminase, domain 2"/>
    <property type="match status" value="1"/>
</dbReference>
<dbReference type="HAMAP" id="MF_00187">
    <property type="entry name" value="FdhD"/>
    <property type="match status" value="1"/>
</dbReference>
<dbReference type="InterPro" id="IPR016193">
    <property type="entry name" value="Cytidine_deaminase-like"/>
</dbReference>
<dbReference type="InterPro" id="IPR003786">
    <property type="entry name" value="FdhD"/>
</dbReference>
<dbReference type="NCBIfam" id="TIGR00129">
    <property type="entry name" value="fdhD_narQ"/>
    <property type="match status" value="1"/>
</dbReference>
<dbReference type="PANTHER" id="PTHR30592">
    <property type="entry name" value="FORMATE DEHYDROGENASE"/>
    <property type="match status" value="1"/>
</dbReference>
<dbReference type="PANTHER" id="PTHR30592:SF1">
    <property type="entry name" value="SULFUR CARRIER PROTEIN FDHD"/>
    <property type="match status" value="1"/>
</dbReference>
<dbReference type="Pfam" id="PF02634">
    <property type="entry name" value="FdhD-NarQ"/>
    <property type="match status" value="1"/>
</dbReference>
<dbReference type="PIRSF" id="PIRSF015626">
    <property type="entry name" value="FdhD"/>
    <property type="match status" value="1"/>
</dbReference>
<dbReference type="SUPFAM" id="SSF53927">
    <property type="entry name" value="Cytidine deaminase-like"/>
    <property type="match status" value="1"/>
</dbReference>
<sequence>MAGEMVEMEVNESAVGSSKTRVISYLRNAGFLEASDSIAVEEPLAIDILGPDGITVRAGVIMRTPVMDRYLVAGFLYSEGLISGISDIEGFEGVDEDGVSHQNHATVKIGKRIGFNVNSRLLNSACGICGRSTIADLLIRHGKIGTDTRIDSETILGLPTAMGRAQALFLKTGGVHAAALFDVQGRLHAVCEDIGRHNAVDKVVGYTLLEGKDTDNSVLMVSGRAGFEIVEKAFLAGFPIVSSVSAPSSLAIQIAEAVGITLVCFVRNNRFNIYSHPERIIP</sequence>
<name>FDHD_THEAC</name>
<organism>
    <name type="scientific">Thermoplasma acidophilum (strain ATCC 25905 / DSM 1728 / JCM 9062 / NBRC 15155 / AMRC-C165)</name>
    <dbReference type="NCBI Taxonomy" id="273075"/>
    <lineage>
        <taxon>Archaea</taxon>
        <taxon>Methanobacteriati</taxon>
        <taxon>Thermoplasmatota</taxon>
        <taxon>Thermoplasmata</taxon>
        <taxon>Thermoplasmatales</taxon>
        <taxon>Thermoplasmataceae</taxon>
        <taxon>Thermoplasma</taxon>
    </lineage>
</organism>
<accession>Q9HL17</accession>
<proteinExistence type="inferred from homology"/>
<gene>
    <name evidence="1" type="primary">fdhD</name>
    <name type="ordered locus">Ta0423</name>
</gene>
<evidence type="ECO:0000255" key="1">
    <source>
        <dbReference type="HAMAP-Rule" id="MF_00187"/>
    </source>
</evidence>